<proteinExistence type="inferred from homology"/>
<sequence length="155" mass="16859">MTVNPDAPALPTLPLAVETIQGLLPHRYPFALVDRIIDYVPGERAVGIKNVTFNEPQFQGHFPGRPLMPGVLIVEAMAQVGGVIVTLMPDMPQGLFVFAGIDQVRFRRPVVPGDQLVLSAQLLSAKRRRFCKIQGEAMVDGQLAASGELVFSLVE</sequence>
<reference key="1">
    <citation type="journal article" date="2007" name="Photosyn. Res.">
        <title>Complete nucleotide sequence of the freshwater unicellular cyanobacterium Synechococcus elongatus PCC 6301 chromosome: gene content and organization.</title>
        <authorList>
            <person name="Sugita C."/>
            <person name="Ogata K."/>
            <person name="Shikata M."/>
            <person name="Jikuya H."/>
            <person name="Takano J."/>
            <person name="Furumichi M."/>
            <person name="Kanehisa M."/>
            <person name="Omata T."/>
            <person name="Sugiura M."/>
            <person name="Sugita M."/>
        </authorList>
    </citation>
    <scope>NUCLEOTIDE SEQUENCE [LARGE SCALE GENOMIC DNA]</scope>
    <source>
        <strain>ATCC 27144 / PCC 6301 / SAUG 1402/1</strain>
    </source>
</reference>
<protein>
    <recommendedName>
        <fullName evidence="1">3-hydroxyacyl-[acyl-carrier-protein] dehydratase FabZ</fullName>
        <ecNumber evidence="1">4.2.1.59</ecNumber>
    </recommendedName>
    <alternativeName>
        <fullName evidence="1">(3R)-hydroxymyristoyl-[acyl-carrier-protein] dehydratase</fullName>
        <shortName evidence="1">(3R)-hydroxymyristoyl-ACP dehydrase</shortName>
    </alternativeName>
    <alternativeName>
        <fullName evidence="1">Beta-hydroxyacyl-ACP dehydratase</fullName>
    </alternativeName>
</protein>
<name>FABZ_SYNP6</name>
<organism>
    <name type="scientific">Synechococcus sp. (strain ATCC 27144 / PCC 6301 / SAUG 1402/1)</name>
    <name type="common">Anacystis nidulans</name>
    <dbReference type="NCBI Taxonomy" id="269084"/>
    <lineage>
        <taxon>Bacteria</taxon>
        <taxon>Bacillati</taxon>
        <taxon>Cyanobacteriota</taxon>
        <taxon>Cyanophyceae</taxon>
        <taxon>Synechococcales</taxon>
        <taxon>Synechococcaceae</taxon>
        <taxon>Synechococcus</taxon>
    </lineage>
</organism>
<feature type="chain" id="PRO_0000091751" description="3-hydroxyacyl-[acyl-carrier-protein] dehydratase FabZ">
    <location>
        <begin position="1"/>
        <end position="155"/>
    </location>
</feature>
<feature type="active site" evidence="1">
    <location>
        <position position="61"/>
    </location>
</feature>
<accession>Q5N4G7</accession>
<dbReference type="EC" id="4.2.1.59" evidence="1"/>
<dbReference type="EMBL" id="AP008231">
    <property type="protein sequence ID" value="BAD78802.1"/>
    <property type="molecule type" value="Genomic_DNA"/>
</dbReference>
<dbReference type="RefSeq" id="WP_011242924.1">
    <property type="nucleotide sequence ID" value="NC_006576.1"/>
</dbReference>
<dbReference type="SMR" id="Q5N4G7"/>
<dbReference type="KEGG" id="syc:syc0612_c"/>
<dbReference type="eggNOG" id="COG0764">
    <property type="taxonomic scope" value="Bacteria"/>
</dbReference>
<dbReference type="Proteomes" id="UP000001175">
    <property type="component" value="Chromosome"/>
</dbReference>
<dbReference type="GO" id="GO:0005737">
    <property type="term" value="C:cytoplasm"/>
    <property type="evidence" value="ECO:0007669"/>
    <property type="project" value="UniProtKB-SubCell"/>
</dbReference>
<dbReference type="GO" id="GO:0016020">
    <property type="term" value="C:membrane"/>
    <property type="evidence" value="ECO:0007669"/>
    <property type="project" value="GOC"/>
</dbReference>
<dbReference type="GO" id="GO:0019171">
    <property type="term" value="F:(3R)-hydroxyacyl-[acyl-carrier-protein] dehydratase activity"/>
    <property type="evidence" value="ECO:0007669"/>
    <property type="project" value="UniProtKB-EC"/>
</dbReference>
<dbReference type="GO" id="GO:0006633">
    <property type="term" value="P:fatty acid biosynthetic process"/>
    <property type="evidence" value="ECO:0007669"/>
    <property type="project" value="UniProtKB-UniRule"/>
</dbReference>
<dbReference type="GO" id="GO:0009245">
    <property type="term" value="P:lipid A biosynthetic process"/>
    <property type="evidence" value="ECO:0007669"/>
    <property type="project" value="UniProtKB-UniRule"/>
</dbReference>
<dbReference type="CDD" id="cd01288">
    <property type="entry name" value="FabZ"/>
    <property type="match status" value="1"/>
</dbReference>
<dbReference type="FunFam" id="3.10.129.10:FF:000001">
    <property type="entry name" value="3-hydroxyacyl-[acyl-carrier-protein] dehydratase FabZ"/>
    <property type="match status" value="1"/>
</dbReference>
<dbReference type="Gene3D" id="3.10.129.10">
    <property type="entry name" value="Hotdog Thioesterase"/>
    <property type="match status" value="1"/>
</dbReference>
<dbReference type="HAMAP" id="MF_00406">
    <property type="entry name" value="FabZ"/>
    <property type="match status" value="1"/>
</dbReference>
<dbReference type="InterPro" id="IPR013114">
    <property type="entry name" value="FabA_FabZ"/>
</dbReference>
<dbReference type="InterPro" id="IPR010084">
    <property type="entry name" value="FabZ"/>
</dbReference>
<dbReference type="InterPro" id="IPR029069">
    <property type="entry name" value="HotDog_dom_sf"/>
</dbReference>
<dbReference type="NCBIfam" id="TIGR01750">
    <property type="entry name" value="fabZ"/>
    <property type="match status" value="1"/>
</dbReference>
<dbReference type="NCBIfam" id="NF000582">
    <property type="entry name" value="PRK00006.1"/>
    <property type="match status" value="1"/>
</dbReference>
<dbReference type="PANTHER" id="PTHR30272">
    <property type="entry name" value="3-HYDROXYACYL-[ACYL-CARRIER-PROTEIN] DEHYDRATASE"/>
    <property type="match status" value="1"/>
</dbReference>
<dbReference type="PANTHER" id="PTHR30272:SF1">
    <property type="entry name" value="3-HYDROXYACYL-[ACYL-CARRIER-PROTEIN] DEHYDRATASE"/>
    <property type="match status" value="1"/>
</dbReference>
<dbReference type="Pfam" id="PF07977">
    <property type="entry name" value="FabA"/>
    <property type="match status" value="1"/>
</dbReference>
<dbReference type="SUPFAM" id="SSF54637">
    <property type="entry name" value="Thioesterase/thiol ester dehydrase-isomerase"/>
    <property type="match status" value="1"/>
</dbReference>
<keyword id="KW-0963">Cytoplasm</keyword>
<keyword id="KW-0441">Lipid A biosynthesis</keyword>
<keyword id="KW-0444">Lipid biosynthesis</keyword>
<keyword id="KW-0443">Lipid metabolism</keyword>
<keyword id="KW-0456">Lyase</keyword>
<gene>
    <name evidence="1" type="primary">fabZ</name>
    <name type="ordered locus">syc0612_c</name>
</gene>
<comment type="function">
    <text evidence="1">Involved in unsaturated fatty acids biosynthesis. Catalyzes the dehydration of short chain beta-hydroxyacyl-ACPs and long chain saturated and unsaturated beta-hydroxyacyl-ACPs.</text>
</comment>
<comment type="catalytic activity">
    <reaction evidence="1">
        <text>a (3R)-hydroxyacyl-[ACP] = a (2E)-enoyl-[ACP] + H2O</text>
        <dbReference type="Rhea" id="RHEA:13097"/>
        <dbReference type="Rhea" id="RHEA-COMP:9925"/>
        <dbReference type="Rhea" id="RHEA-COMP:9945"/>
        <dbReference type="ChEBI" id="CHEBI:15377"/>
        <dbReference type="ChEBI" id="CHEBI:78784"/>
        <dbReference type="ChEBI" id="CHEBI:78827"/>
        <dbReference type="EC" id="4.2.1.59"/>
    </reaction>
</comment>
<comment type="subcellular location">
    <subcellularLocation>
        <location evidence="1">Cytoplasm</location>
    </subcellularLocation>
</comment>
<comment type="similarity">
    <text evidence="1">Belongs to the thioester dehydratase family. FabZ subfamily.</text>
</comment>
<evidence type="ECO:0000255" key="1">
    <source>
        <dbReference type="HAMAP-Rule" id="MF_00406"/>
    </source>
</evidence>